<accession>B9J8H9</accession>
<protein>
    <recommendedName>
        <fullName evidence="1">Glucose-6-phosphate isomerase</fullName>
        <shortName evidence="1">GPI</shortName>
        <ecNumber evidence="1">5.3.1.9</ecNumber>
    </recommendedName>
    <alternativeName>
        <fullName evidence="1">Phosphoglucose isomerase</fullName>
        <shortName evidence="1">PGI</shortName>
    </alternativeName>
    <alternativeName>
        <fullName evidence="1">Phosphohexose isomerase</fullName>
        <shortName evidence="1">PHI</shortName>
    </alternativeName>
</protein>
<evidence type="ECO:0000255" key="1">
    <source>
        <dbReference type="HAMAP-Rule" id="MF_00473"/>
    </source>
</evidence>
<proteinExistence type="inferred from homology"/>
<sequence length="541" mass="58496">MNALVDQLKSTAAASKATDIRAAFAADPKRFSRFSASFDDLLMDYSKTAVNDEILTLLEKLATEGGVAAKREEMFSGVAINFTEDRAVLHTALRNRSNTPVLVDGKDVMPDVNGVLAAMGKFADGIRSGTLKGATGKAITDVINIGIGGSDLGPVMATLALAPFHDGPRSYFVSNIDGAHIADILKLVSPETTLFIIASKTFTTIETMTNAQTARNFIAKALGEAAVQHHFAAVSTALDKVAAFGIDSARVFGFWDWVGGRYSIWSAIGLPLMIAVGPENFGKFLDGAHAMDNHFRKAPFKENLPMLLGLIGFYHRNVLGYTTRAILPYDQRLSRFPAYLQQLDMESNGKGVTIDGTPVEGNSGPVVWGEPGTNGQHAFYQLIHQGTSIIPAEFMIAANGFEPDLRHQHELLIANCLAQSEALMKGRTFEEAKAQLTSKGMDDKKADFIAPHRVFTGNRPSITFVYDKLTPFALGRLIALYEHRVFVEGVLFRINSFDQWGVELGKELATGLLPVVEGKESAAGHDSSTQGLVAALSKLEK</sequence>
<comment type="function">
    <text evidence="1">Catalyzes the reversible isomerization of glucose-6-phosphate to fructose-6-phosphate.</text>
</comment>
<comment type="catalytic activity">
    <reaction evidence="1">
        <text>alpha-D-glucose 6-phosphate = beta-D-fructose 6-phosphate</text>
        <dbReference type="Rhea" id="RHEA:11816"/>
        <dbReference type="ChEBI" id="CHEBI:57634"/>
        <dbReference type="ChEBI" id="CHEBI:58225"/>
        <dbReference type="EC" id="5.3.1.9"/>
    </reaction>
</comment>
<comment type="pathway">
    <text evidence="1">Carbohydrate biosynthesis; gluconeogenesis.</text>
</comment>
<comment type="pathway">
    <text evidence="1">Carbohydrate degradation; glycolysis; D-glyceraldehyde 3-phosphate and glycerone phosphate from D-glucose: step 2/4.</text>
</comment>
<comment type="subcellular location">
    <subcellularLocation>
        <location evidence="1">Cytoplasm</location>
    </subcellularLocation>
</comment>
<comment type="similarity">
    <text evidence="1">Belongs to the GPI family.</text>
</comment>
<organism>
    <name type="scientific">Rhizobium rhizogenes (strain K84 / ATCC BAA-868)</name>
    <name type="common">Agrobacterium radiobacter</name>
    <dbReference type="NCBI Taxonomy" id="311403"/>
    <lineage>
        <taxon>Bacteria</taxon>
        <taxon>Pseudomonadati</taxon>
        <taxon>Pseudomonadota</taxon>
        <taxon>Alphaproteobacteria</taxon>
        <taxon>Hyphomicrobiales</taxon>
        <taxon>Rhizobiaceae</taxon>
        <taxon>Rhizobium/Agrobacterium group</taxon>
        <taxon>Rhizobium</taxon>
    </lineage>
</organism>
<feature type="chain" id="PRO_1000135515" description="Glucose-6-phosphate isomerase">
    <location>
        <begin position="1"/>
        <end position="541"/>
    </location>
</feature>
<feature type="active site" description="Proton donor" evidence="1">
    <location>
        <position position="346"/>
    </location>
</feature>
<feature type="active site" evidence="1">
    <location>
        <position position="377"/>
    </location>
</feature>
<feature type="active site" evidence="1">
    <location>
        <position position="506"/>
    </location>
</feature>
<name>G6PI_RHIR8</name>
<dbReference type="EC" id="5.3.1.9" evidence="1"/>
<dbReference type="EMBL" id="CP000628">
    <property type="protein sequence ID" value="ACM25366.1"/>
    <property type="molecule type" value="Genomic_DNA"/>
</dbReference>
<dbReference type="RefSeq" id="WP_007695522.1">
    <property type="nucleotide sequence ID" value="NC_011985.1"/>
</dbReference>
<dbReference type="SMR" id="B9J8H9"/>
<dbReference type="STRING" id="311403.Arad_0744"/>
<dbReference type="KEGG" id="ara:Arad_0744"/>
<dbReference type="eggNOG" id="COG0166">
    <property type="taxonomic scope" value="Bacteria"/>
</dbReference>
<dbReference type="HOGENOM" id="CLU_017947_3_1_5"/>
<dbReference type="UniPathway" id="UPA00109">
    <property type="reaction ID" value="UER00181"/>
</dbReference>
<dbReference type="UniPathway" id="UPA00138"/>
<dbReference type="Proteomes" id="UP000001600">
    <property type="component" value="Chromosome 1"/>
</dbReference>
<dbReference type="GO" id="GO:0005829">
    <property type="term" value="C:cytosol"/>
    <property type="evidence" value="ECO:0007669"/>
    <property type="project" value="TreeGrafter"/>
</dbReference>
<dbReference type="GO" id="GO:0097367">
    <property type="term" value="F:carbohydrate derivative binding"/>
    <property type="evidence" value="ECO:0007669"/>
    <property type="project" value="InterPro"/>
</dbReference>
<dbReference type="GO" id="GO:0004347">
    <property type="term" value="F:glucose-6-phosphate isomerase activity"/>
    <property type="evidence" value="ECO:0007669"/>
    <property type="project" value="UniProtKB-UniRule"/>
</dbReference>
<dbReference type="GO" id="GO:0048029">
    <property type="term" value="F:monosaccharide binding"/>
    <property type="evidence" value="ECO:0007669"/>
    <property type="project" value="TreeGrafter"/>
</dbReference>
<dbReference type="GO" id="GO:0006094">
    <property type="term" value="P:gluconeogenesis"/>
    <property type="evidence" value="ECO:0007669"/>
    <property type="project" value="UniProtKB-UniRule"/>
</dbReference>
<dbReference type="GO" id="GO:0051156">
    <property type="term" value="P:glucose 6-phosphate metabolic process"/>
    <property type="evidence" value="ECO:0007669"/>
    <property type="project" value="TreeGrafter"/>
</dbReference>
<dbReference type="GO" id="GO:0006096">
    <property type="term" value="P:glycolytic process"/>
    <property type="evidence" value="ECO:0007669"/>
    <property type="project" value="UniProtKB-UniRule"/>
</dbReference>
<dbReference type="CDD" id="cd05015">
    <property type="entry name" value="SIS_PGI_1"/>
    <property type="match status" value="1"/>
</dbReference>
<dbReference type="CDD" id="cd05016">
    <property type="entry name" value="SIS_PGI_2"/>
    <property type="match status" value="1"/>
</dbReference>
<dbReference type="FunFam" id="3.40.50.10490:FF:000122">
    <property type="match status" value="1"/>
</dbReference>
<dbReference type="Gene3D" id="1.10.1390.10">
    <property type="match status" value="1"/>
</dbReference>
<dbReference type="Gene3D" id="3.40.50.10490">
    <property type="entry name" value="Glucose-6-phosphate isomerase like protein, domain 1"/>
    <property type="match status" value="2"/>
</dbReference>
<dbReference type="HAMAP" id="MF_00473">
    <property type="entry name" value="G6P_isomerase"/>
    <property type="match status" value="1"/>
</dbReference>
<dbReference type="InterPro" id="IPR001672">
    <property type="entry name" value="G6P_Isomerase"/>
</dbReference>
<dbReference type="InterPro" id="IPR023096">
    <property type="entry name" value="G6P_Isomerase_C"/>
</dbReference>
<dbReference type="InterPro" id="IPR018189">
    <property type="entry name" value="Phosphoglucose_isomerase_CS"/>
</dbReference>
<dbReference type="InterPro" id="IPR046348">
    <property type="entry name" value="SIS_dom_sf"/>
</dbReference>
<dbReference type="InterPro" id="IPR035476">
    <property type="entry name" value="SIS_PGI_1"/>
</dbReference>
<dbReference type="InterPro" id="IPR035482">
    <property type="entry name" value="SIS_PGI_2"/>
</dbReference>
<dbReference type="NCBIfam" id="NF001211">
    <property type="entry name" value="PRK00179.1"/>
    <property type="match status" value="1"/>
</dbReference>
<dbReference type="PANTHER" id="PTHR11469">
    <property type="entry name" value="GLUCOSE-6-PHOSPHATE ISOMERASE"/>
    <property type="match status" value="1"/>
</dbReference>
<dbReference type="PANTHER" id="PTHR11469:SF1">
    <property type="entry name" value="GLUCOSE-6-PHOSPHATE ISOMERASE"/>
    <property type="match status" value="1"/>
</dbReference>
<dbReference type="Pfam" id="PF00342">
    <property type="entry name" value="PGI"/>
    <property type="match status" value="1"/>
</dbReference>
<dbReference type="PRINTS" id="PR00662">
    <property type="entry name" value="G6PISOMERASE"/>
</dbReference>
<dbReference type="SUPFAM" id="SSF53697">
    <property type="entry name" value="SIS domain"/>
    <property type="match status" value="1"/>
</dbReference>
<dbReference type="PROSITE" id="PS00765">
    <property type="entry name" value="P_GLUCOSE_ISOMERASE_1"/>
    <property type="match status" value="1"/>
</dbReference>
<dbReference type="PROSITE" id="PS00174">
    <property type="entry name" value="P_GLUCOSE_ISOMERASE_2"/>
    <property type="match status" value="1"/>
</dbReference>
<dbReference type="PROSITE" id="PS51463">
    <property type="entry name" value="P_GLUCOSE_ISOMERASE_3"/>
    <property type="match status" value="1"/>
</dbReference>
<reference key="1">
    <citation type="journal article" date="2009" name="J. Bacteriol.">
        <title>Genome sequences of three Agrobacterium biovars help elucidate the evolution of multichromosome genomes in bacteria.</title>
        <authorList>
            <person name="Slater S.C."/>
            <person name="Goldman B.S."/>
            <person name="Goodner B."/>
            <person name="Setubal J.C."/>
            <person name="Farrand S.K."/>
            <person name="Nester E.W."/>
            <person name="Burr T.J."/>
            <person name="Banta L."/>
            <person name="Dickerman A.W."/>
            <person name="Paulsen I."/>
            <person name="Otten L."/>
            <person name="Suen G."/>
            <person name="Welch R."/>
            <person name="Almeida N.F."/>
            <person name="Arnold F."/>
            <person name="Burton O.T."/>
            <person name="Du Z."/>
            <person name="Ewing A."/>
            <person name="Godsy E."/>
            <person name="Heisel S."/>
            <person name="Houmiel K.L."/>
            <person name="Jhaveri J."/>
            <person name="Lu J."/>
            <person name="Miller N.M."/>
            <person name="Norton S."/>
            <person name="Chen Q."/>
            <person name="Phoolcharoen W."/>
            <person name="Ohlin V."/>
            <person name="Ondrusek D."/>
            <person name="Pride N."/>
            <person name="Stricklin S.L."/>
            <person name="Sun J."/>
            <person name="Wheeler C."/>
            <person name="Wilson L."/>
            <person name="Zhu H."/>
            <person name="Wood D.W."/>
        </authorList>
    </citation>
    <scope>NUCLEOTIDE SEQUENCE [LARGE SCALE GENOMIC DNA]</scope>
    <source>
        <strain>K84 / ATCC BAA-868</strain>
    </source>
</reference>
<gene>
    <name evidence="1" type="primary">pgi</name>
    <name type="ordered locus">Arad_0744</name>
</gene>
<keyword id="KW-0963">Cytoplasm</keyword>
<keyword id="KW-0312">Gluconeogenesis</keyword>
<keyword id="KW-0324">Glycolysis</keyword>
<keyword id="KW-0413">Isomerase</keyword>